<reference key="1">
    <citation type="journal article" date="2005" name="Genome Biol.">
        <title>Full-length cDNAs from chicken bursal lymphocytes to facilitate gene function analysis.</title>
        <authorList>
            <person name="Caldwell R.B."/>
            <person name="Kierzek A.M."/>
            <person name="Arakawa H."/>
            <person name="Bezzubov Y."/>
            <person name="Zaim J."/>
            <person name="Fiedler P."/>
            <person name="Kutter S."/>
            <person name="Blagodatski A."/>
            <person name="Kostovska D."/>
            <person name="Koter M."/>
            <person name="Plachy J."/>
            <person name="Carninci P."/>
            <person name="Hayashizaki Y."/>
            <person name="Buerstedde J.-M."/>
        </authorList>
    </citation>
    <scope>NUCLEOTIDE SEQUENCE [LARGE SCALE MRNA]</scope>
    <source>
        <strain>CB</strain>
        <tissue>Bursa of Fabricius</tissue>
    </source>
</reference>
<protein>
    <recommendedName>
        <fullName>Ras-related protein Rab-33B</fullName>
        <ecNumber evidence="3">3.6.5.2</ecNumber>
    </recommendedName>
</protein>
<organism>
    <name type="scientific">Gallus gallus</name>
    <name type="common">Chicken</name>
    <dbReference type="NCBI Taxonomy" id="9031"/>
    <lineage>
        <taxon>Eukaryota</taxon>
        <taxon>Metazoa</taxon>
        <taxon>Chordata</taxon>
        <taxon>Craniata</taxon>
        <taxon>Vertebrata</taxon>
        <taxon>Euteleostomi</taxon>
        <taxon>Archelosauria</taxon>
        <taxon>Archosauria</taxon>
        <taxon>Dinosauria</taxon>
        <taxon>Saurischia</taxon>
        <taxon>Theropoda</taxon>
        <taxon>Coelurosauria</taxon>
        <taxon>Aves</taxon>
        <taxon>Neognathae</taxon>
        <taxon>Galloanserae</taxon>
        <taxon>Galliformes</taxon>
        <taxon>Phasianidae</taxon>
        <taxon>Phasianinae</taxon>
        <taxon>Gallus</taxon>
    </lineage>
</organism>
<evidence type="ECO:0000250" key="1"/>
<evidence type="ECO:0000250" key="2">
    <source>
        <dbReference type="UniProtKB" id="O35963"/>
    </source>
</evidence>
<evidence type="ECO:0000250" key="3">
    <source>
        <dbReference type="UniProtKB" id="Q9H082"/>
    </source>
</evidence>
<evidence type="ECO:0000305" key="4"/>
<keyword id="KW-0072">Autophagy</keyword>
<keyword id="KW-0333">Golgi apparatus</keyword>
<keyword id="KW-0342">GTP-binding</keyword>
<keyword id="KW-0378">Hydrolase</keyword>
<keyword id="KW-0449">Lipoprotein</keyword>
<keyword id="KW-0460">Magnesium</keyword>
<keyword id="KW-0472">Membrane</keyword>
<keyword id="KW-0479">Metal-binding</keyword>
<keyword id="KW-0488">Methylation</keyword>
<keyword id="KW-0547">Nucleotide-binding</keyword>
<keyword id="KW-0636">Prenylation</keyword>
<keyword id="KW-0653">Protein transport</keyword>
<keyword id="KW-1185">Reference proteome</keyword>
<keyword id="KW-0813">Transport</keyword>
<sequence>MAAELESSLELSFTGSGTVPGGGLPPARSRIFKIIVIGDSNVGKTCLTYRFCAGRFPQRTEATIGVDFRERAVTIDGERIKIQLWDTAGQERFRKSMVQHYYRNVHAVVFVYDMTNLASFHSLPSWIEECKQHLLTNDIPRILVGNKCDLRNAIQVPTDLAQKFADTHSMPLFETSAKNPNDNDHVEAIFMTLAHKLKSHKPLMLSQPPDRDQIHIKPEPKPAMTCWC</sequence>
<accession>Q5ZHV1</accession>
<comment type="function">
    <text evidence="3">The small GTPases Rab are key regulators of intracellular membrane trafficking, from the formation of transport vesicles to their fusion with membranes. Rabs cycle between an inactive GDP-bound form and an active GTP-bound form that is able to recruit to membranes different sets of downstream effectors directly responsible for vesicle formation, movement, tethering and fusion. RAB33B acts, in coordination with RAB6A, to regulate intra-Golgi retrograde trafficking. Participates in autophagosome formation by recruiting the ATG12-ATG5-ATG16L1 complex to phagophores, probably in a nucleotide-independent manner.</text>
</comment>
<comment type="catalytic activity">
    <reaction evidence="3">
        <text>GTP + H2O = GDP + phosphate + H(+)</text>
        <dbReference type="Rhea" id="RHEA:19669"/>
        <dbReference type="ChEBI" id="CHEBI:15377"/>
        <dbReference type="ChEBI" id="CHEBI:15378"/>
        <dbReference type="ChEBI" id="CHEBI:37565"/>
        <dbReference type="ChEBI" id="CHEBI:43474"/>
        <dbReference type="ChEBI" id="CHEBI:58189"/>
        <dbReference type="EC" id="3.6.5.2"/>
    </reaction>
    <physiologicalReaction direction="left-to-right" evidence="3">
        <dbReference type="Rhea" id="RHEA:19670"/>
    </physiologicalReaction>
</comment>
<comment type="cofactor">
    <cofactor evidence="3">
        <name>Mg(2+)</name>
        <dbReference type="ChEBI" id="CHEBI:18420"/>
    </cofactor>
</comment>
<comment type="activity regulation">
    <text evidence="3">Regulated by guanine nucleotide exchange factors (GEFs) which promote the exchange of bound GDP for free GTP. Regulated by GTPase activating proteins (GAPs) such as SGSM2 which increase the GTP hydrolysis activity. Inhibited by GDP dissociation inhibitors (GDIs).</text>
</comment>
<comment type="subunit">
    <text evidence="2 3">Interacts (GTP- and GDP-bound forms) with ATG16L1; the complex consists of a tetramer where two RAB33B molecules bind independently one molecule of the ATG16L1 homodimer; the interaction promotes ATG12-ATG5-ATG16L1 complex recruitment to phagophores (By similarity). Interacts with ATG16L2; however interaction is approximately hundred times lower than for ATG16L1 (By similarity). Interacts with RIC1 (via C-terminus domain); the interaction is direct with a preference for RAB33B-GTP. Interacts with RGP1 (By similarity).</text>
</comment>
<comment type="subcellular location">
    <subcellularLocation>
        <location evidence="3">Golgi apparatus membrane</location>
        <topology evidence="3">Lipid-anchor</topology>
    </subcellularLocation>
    <subcellularLocation>
        <location evidence="3">Golgi apparatus</location>
        <location evidence="3">cis-Golgi network</location>
    </subcellularLocation>
    <subcellularLocation>
        <location evidence="3">Preautophagosomal structure membrane</location>
    </subcellularLocation>
    <text evidence="2 3">Under starvation conditions punctate RAB33B-positive structures are often observed in the cytoplasm. Under starved conditions RAB33B translocates from the Golgi to phagophores; this translocation is driven by interaction with ATG16L1.</text>
</comment>
<comment type="domain">
    <text evidence="3">Switch 1, switch 2 and the interswitch regions are characteristic of Rab GTPases and mediate the interactions with Rab downstream effectors. The switch regions undergo conformational changes upon nucleotide binding which drive interaction with specific sets of effector proteins. Although most effectors only bind GTP-bound Rab, ATG16L1 effector binds both GTP- and GDP-bound RAB33B.</text>
</comment>
<comment type="similarity">
    <text evidence="4">Belongs to the small GTPase superfamily. Rab family.</text>
</comment>
<proteinExistence type="evidence at transcript level"/>
<dbReference type="EC" id="3.6.5.2" evidence="3"/>
<dbReference type="EMBL" id="AJ721033">
    <property type="protein sequence ID" value="CAG32692.1"/>
    <property type="molecule type" value="mRNA"/>
</dbReference>
<dbReference type="RefSeq" id="NP_001008466.1">
    <property type="nucleotide sequence ID" value="NM_001008466.2"/>
</dbReference>
<dbReference type="SMR" id="Q5ZHV1"/>
<dbReference type="FunCoup" id="Q5ZHV1">
    <property type="interactions" value="1033"/>
</dbReference>
<dbReference type="STRING" id="9031.ENSGALP00000015909"/>
<dbReference type="PaxDb" id="9031-ENSGALP00000015909"/>
<dbReference type="Ensembl" id="ENSGALT00010020353.1">
    <property type="protein sequence ID" value="ENSGALP00010011838.1"/>
    <property type="gene ID" value="ENSGALG00010008534.1"/>
</dbReference>
<dbReference type="GeneID" id="422441"/>
<dbReference type="KEGG" id="gga:422441"/>
<dbReference type="CTD" id="83452"/>
<dbReference type="VEuPathDB" id="HostDB:geneid_422441"/>
<dbReference type="eggNOG" id="KOG0084">
    <property type="taxonomic scope" value="Eukaryota"/>
</dbReference>
<dbReference type="GeneTree" id="ENSGT00940000157090"/>
<dbReference type="HOGENOM" id="CLU_041217_10_3_1"/>
<dbReference type="InParanoid" id="Q5ZHV1"/>
<dbReference type="OMA" id="PLWIEEC"/>
<dbReference type="OrthoDB" id="10006973at2759"/>
<dbReference type="PhylomeDB" id="Q5ZHV1"/>
<dbReference type="TreeFam" id="TF300097"/>
<dbReference type="Reactome" id="R-GGA-6811438">
    <property type="pathway name" value="Intra-Golgi traffic"/>
</dbReference>
<dbReference type="Reactome" id="R-GGA-8854214">
    <property type="pathway name" value="TBC/RABGAPs"/>
</dbReference>
<dbReference type="PRO" id="PR:Q5ZHV1"/>
<dbReference type="Proteomes" id="UP000000539">
    <property type="component" value="Chromosome 4"/>
</dbReference>
<dbReference type="Bgee" id="ENSGALG00000009790">
    <property type="expression patterns" value="Expressed in muscle tissue and 13 other cell types or tissues"/>
</dbReference>
<dbReference type="GO" id="GO:0005768">
    <property type="term" value="C:endosome"/>
    <property type="evidence" value="ECO:0000318"/>
    <property type="project" value="GO_Central"/>
</dbReference>
<dbReference type="GO" id="GO:0005794">
    <property type="term" value="C:Golgi apparatus"/>
    <property type="evidence" value="ECO:0000318"/>
    <property type="project" value="GO_Central"/>
</dbReference>
<dbReference type="GO" id="GO:0005796">
    <property type="term" value="C:Golgi lumen"/>
    <property type="evidence" value="ECO:0000250"/>
    <property type="project" value="UniProtKB"/>
</dbReference>
<dbReference type="GO" id="GO:0000139">
    <property type="term" value="C:Golgi membrane"/>
    <property type="evidence" value="ECO:0000250"/>
    <property type="project" value="UniProtKB"/>
</dbReference>
<dbReference type="GO" id="GO:0034045">
    <property type="term" value="C:phagophore assembly site membrane"/>
    <property type="evidence" value="ECO:0000250"/>
    <property type="project" value="UniProtKB"/>
</dbReference>
<dbReference type="GO" id="GO:0003925">
    <property type="term" value="F:G protein activity"/>
    <property type="evidence" value="ECO:0000250"/>
    <property type="project" value="UniProtKB"/>
</dbReference>
<dbReference type="GO" id="GO:0005525">
    <property type="term" value="F:GTP binding"/>
    <property type="evidence" value="ECO:0000318"/>
    <property type="project" value="GO_Central"/>
</dbReference>
<dbReference type="GO" id="GO:0003924">
    <property type="term" value="F:GTPase activity"/>
    <property type="evidence" value="ECO:0000318"/>
    <property type="project" value="GO_Central"/>
</dbReference>
<dbReference type="GO" id="GO:0000045">
    <property type="term" value="P:autophagosome assembly"/>
    <property type="evidence" value="ECO:0000250"/>
    <property type="project" value="UniProtKB"/>
</dbReference>
<dbReference type="GO" id="GO:0006891">
    <property type="term" value="P:intra-Golgi vesicle-mediated transport"/>
    <property type="evidence" value="ECO:0007669"/>
    <property type="project" value="Ensembl"/>
</dbReference>
<dbReference type="GO" id="GO:1903434">
    <property type="term" value="P:negative regulation of constitutive secretory pathway"/>
    <property type="evidence" value="ECO:0007669"/>
    <property type="project" value="Ensembl"/>
</dbReference>
<dbReference type="GO" id="GO:0034067">
    <property type="term" value="P:protein localization to Golgi apparatus"/>
    <property type="evidence" value="ECO:0007669"/>
    <property type="project" value="Ensembl"/>
</dbReference>
<dbReference type="GO" id="GO:0034497">
    <property type="term" value="P:protein localization to phagophore assembly site"/>
    <property type="evidence" value="ECO:0000250"/>
    <property type="project" value="UniProtKB"/>
</dbReference>
<dbReference type="GO" id="GO:0015031">
    <property type="term" value="P:protein transport"/>
    <property type="evidence" value="ECO:0007669"/>
    <property type="project" value="UniProtKB-KW"/>
</dbReference>
<dbReference type="GO" id="GO:0032482">
    <property type="term" value="P:Rab protein signal transduction"/>
    <property type="evidence" value="ECO:0007669"/>
    <property type="project" value="InterPro"/>
</dbReference>
<dbReference type="GO" id="GO:0017157">
    <property type="term" value="P:regulation of exocytosis"/>
    <property type="evidence" value="ECO:0000318"/>
    <property type="project" value="GO_Central"/>
</dbReference>
<dbReference type="GO" id="GO:1903358">
    <property type="term" value="P:regulation of Golgi organization"/>
    <property type="evidence" value="ECO:0007669"/>
    <property type="project" value="Ensembl"/>
</dbReference>
<dbReference type="GO" id="GO:2000156">
    <property type="term" value="P:regulation of retrograde vesicle-mediated transport, Golgi to ER"/>
    <property type="evidence" value="ECO:0000250"/>
    <property type="project" value="UniProtKB"/>
</dbReference>
<dbReference type="GO" id="GO:0048705">
    <property type="term" value="P:skeletal system morphogenesis"/>
    <property type="evidence" value="ECO:0007669"/>
    <property type="project" value="Ensembl"/>
</dbReference>
<dbReference type="CDD" id="cd04115">
    <property type="entry name" value="Rab33B_Rab33A"/>
    <property type="match status" value="1"/>
</dbReference>
<dbReference type="FunFam" id="3.40.50.300:FF:000516">
    <property type="entry name" value="RAB33B, member RAS oncogene family"/>
    <property type="match status" value="1"/>
</dbReference>
<dbReference type="Gene3D" id="3.40.50.300">
    <property type="entry name" value="P-loop containing nucleotide triphosphate hydrolases"/>
    <property type="match status" value="1"/>
</dbReference>
<dbReference type="InterPro" id="IPR027417">
    <property type="entry name" value="P-loop_NTPase"/>
</dbReference>
<dbReference type="InterPro" id="IPR041822">
    <property type="entry name" value="Rab33A/B"/>
</dbReference>
<dbReference type="InterPro" id="IPR005225">
    <property type="entry name" value="Small_GTP-bd"/>
</dbReference>
<dbReference type="InterPro" id="IPR001806">
    <property type="entry name" value="Small_GTPase"/>
</dbReference>
<dbReference type="NCBIfam" id="TIGR00231">
    <property type="entry name" value="small_GTP"/>
    <property type="match status" value="1"/>
</dbReference>
<dbReference type="PANTHER" id="PTHR47978">
    <property type="match status" value="1"/>
</dbReference>
<dbReference type="Pfam" id="PF00071">
    <property type="entry name" value="Ras"/>
    <property type="match status" value="1"/>
</dbReference>
<dbReference type="PRINTS" id="PR00449">
    <property type="entry name" value="RASTRNSFRMNG"/>
</dbReference>
<dbReference type="SMART" id="SM00175">
    <property type="entry name" value="RAB"/>
    <property type="match status" value="1"/>
</dbReference>
<dbReference type="SMART" id="SM00176">
    <property type="entry name" value="RAN"/>
    <property type="match status" value="1"/>
</dbReference>
<dbReference type="SMART" id="SM00173">
    <property type="entry name" value="RAS"/>
    <property type="match status" value="1"/>
</dbReference>
<dbReference type="SMART" id="SM00174">
    <property type="entry name" value="RHO"/>
    <property type="match status" value="1"/>
</dbReference>
<dbReference type="SUPFAM" id="SSF52540">
    <property type="entry name" value="P-loop containing nucleoside triphosphate hydrolases"/>
    <property type="match status" value="1"/>
</dbReference>
<dbReference type="PROSITE" id="PS51419">
    <property type="entry name" value="RAB"/>
    <property type="match status" value="1"/>
</dbReference>
<name>RB33B_CHICK</name>
<gene>
    <name type="primary">RAB33B</name>
    <name type="ORF">RCJMB04_32p6</name>
</gene>
<feature type="chain" id="PRO_0000261126" description="Ras-related protein Rab-33B">
    <location>
        <begin position="1"/>
        <end position="228"/>
    </location>
</feature>
<feature type="short sequence motif" description="Switch 1" evidence="3">
    <location>
        <begin position="54"/>
        <end position="66"/>
    </location>
</feature>
<feature type="short sequence motif" description="Switch 2" evidence="3">
    <location>
        <begin position="87"/>
        <end position="106"/>
    </location>
</feature>
<feature type="binding site" evidence="3">
    <location>
        <position position="41"/>
    </location>
    <ligand>
        <name>GTP</name>
        <dbReference type="ChEBI" id="CHEBI:37565"/>
    </ligand>
</feature>
<feature type="binding site" evidence="3">
    <location>
        <position position="42"/>
    </location>
    <ligand>
        <name>GTP</name>
        <dbReference type="ChEBI" id="CHEBI:37565"/>
    </ligand>
</feature>
<feature type="binding site" evidence="3">
    <location>
        <position position="43"/>
    </location>
    <ligand>
        <name>GTP</name>
        <dbReference type="ChEBI" id="CHEBI:37565"/>
    </ligand>
</feature>
<feature type="binding site" evidence="3">
    <location>
        <position position="44"/>
    </location>
    <ligand>
        <name>GTP</name>
        <dbReference type="ChEBI" id="CHEBI:37565"/>
    </ligand>
</feature>
<feature type="binding site" evidence="3">
    <location>
        <position position="45"/>
    </location>
    <ligand>
        <name>GTP</name>
        <dbReference type="ChEBI" id="CHEBI:37565"/>
    </ligand>
</feature>
<feature type="binding site" evidence="3">
    <location>
        <position position="45"/>
    </location>
    <ligand>
        <name>Mg(2+)</name>
        <dbReference type="ChEBI" id="CHEBI:18420"/>
    </ligand>
</feature>
<feature type="binding site" evidence="3">
    <location>
        <position position="46"/>
    </location>
    <ligand>
        <name>GTP</name>
        <dbReference type="ChEBI" id="CHEBI:37565"/>
    </ligand>
</feature>
<feature type="binding site" evidence="3">
    <location>
        <position position="60"/>
    </location>
    <ligand>
        <name>GTP</name>
        <dbReference type="ChEBI" id="CHEBI:37565"/>
    </ligand>
</feature>
<feature type="binding site" evidence="3">
    <location>
        <position position="63"/>
    </location>
    <ligand>
        <name>GTP</name>
        <dbReference type="ChEBI" id="CHEBI:37565"/>
    </ligand>
</feature>
<feature type="binding site" evidence="3">
    <location>
        <position position="63"/>
    </location>
    <ligand>
        <name>Mg(2+)</name>
        <dbReference type="ChEBI" id="CHEBI:18420"/>
    </ligand>
</feature>
<feature type="binding site" evidence="3">
    <location>
        <position position="86"/>
    </location>
    <ligand>
        <name>Mg(2+)</name>
        <dbReference type="ChEBI" id="CHEBI:18420"/>
    </ligand>
</feature>
<feature type="binding site" evidence="3">
    <location>
        <position position="89"/>
    </location>
    <ligand>
        <name>GTP</name>
        <dbReference type="ChEBI" id="CHEBI:37565"/>
    </ligand>
</feature>
<feature type="binding site" evidence="3">
    <location>
        <position position="146"/>
    </location>
    <ligand>
        <name>GTP</name>
        <dbReference type="ChEBI" id="CHEBI:37565"/>
    </ligand>
</feature>
<feature type="binding site" evidence="3">
    <location>
        <position position="147"/>
    </location>
    <ligand>
        <name>GTP</name>
        <dbReference type="ChEBI" id="CHEBI:37565"/>
    </ligand>
</feature>
<feature type="binding site" evidence="3">
    <location>
        <position position="149"/>
    </location>
    <ligand>
        <name>GTP</name>
        <dbReference type="ChEBI" id="CHEBI:37565"/>
    </ligand>
</feature>
<feature type="binding site" evidence="3">
    <location>
        <position position="177"/>
    </location>
    <ligand>
        <name>GTP</name>
        <dbReference type="ChEBI" id="CHEBI:37565"/>
    </ligand>
</feature>
<feature type="binding site" evidence="3">
    <location>
        <position position="178"/>
    </location>
    <ligand>
        <name>GTP</name>
        <dbReference type="ChEBI" id="CHEBI:37565"/>
    </ligand>
</feature>
<feature type="modified residue" description="Cysteine methyl ester" evidence="1">
    <location>
        <position position="228"/>
    </location>
</feature>
<feature type="lipid moiety-binding region" description="S-geranylgeranyl cysteine" evidence="1">
    <location>
        <position position="226"/>
    </location>
</feature>
<feature type="lipid moiety-binding region" description="S-geranylgeranyl cysteine" evidence="1">
    <location>
        <position position="228"/>
    </location>
</feature>